<comment type="function">
    <text evidence="1">The alpha subunit is responsible for the aldol cleavage of indoleglycerol phosphate to indole and glyceraldehyde 3-phosphate.</text>
</comment>
<comment type="catalytic activity">
    <reaction evidence="1">
        <text>(1S,2R)-1-C-(indol-3-yl)glycerol 3-phosphate + L-serine = D-glyceraldehyde 3-phosphate + L-tryptophan + H2O</text>
        <dbReference type="Rhea" id="RHEA:10532"/>
        <dbReference type="ChEBI" id="CHEBI:15377"/>
        <dbReference type="ChEBI" id="CHEBI:33384"/>
        <dbReference type="ChEBI" id="CHEBI:57912"/>
        <dbReference type="ChEBI" id="CHEBI:58866"/>
        <dbReference type="ChEBI" id="CHEBI:59776"/>
        <dbReference type="EC" id="4.2.1.20"/>
    </reaction>
</comment>
<comment type="pathway">
    <text evidence="1">Amino-acid biosynthesis; L-tryptophan biosynthesis; L-tryptophan from chorismate: step 5/5.</text>
</comment>
<comment type="subunit">
    <text evidence="1">Tetramer of two alpha and two beta chains.</text>
</comment>
<comment type="similarity">
    <text evidence="1">Belongs to the TrpA family.</text>
</comment>
<organism>
    <name type="scientific">Lactococcus lactis subsp. lactis (strain IL1403)</name>
    <name type="common">Streptococcus lactis</name>
    <dbReference type="NCBI Taxonomy" id="272623"/>
    <lineage>
        <taxon>Bacteria</taxon>
        <taxon>Bacillati</taxon>
        <taxon>Bacillota</taxon>
        <taxon>Bacilli</taxon>
        <taxon>Lactobacillales</taxon>
        <taxon>Streptococcaceae</taxon>
        <taxon>Lactococcus</taxon>
    </lineage>
</organism>
<dbReference type="EC" id="4.2.1.20" evidence="1"/>
<dbReference type="EMBL" id="M87483">
    <property type="protein sequence ID" value="AAA25229.1"/>
    <property type="molecule type" value="Genomic_DNA"/>
</dbReference>
<dbReference type="EMBL" id="AE005176">
    <property type="protein sequence ID" value="AAK05560.1"/>
    <property type="molecule type" value="Genomic_DNA"/>
</dbReference>
<dbReference type="PIR" id="S35130">
    <property type="entry name" value="S35130"/>
</dbReference>
<dbReference type="RefSeq" id="NP_267618.1">
    <property type="nucleotide sequence ID" value="NC_002662.1"/>
</dbReference>
<dbReference type="RefSeq" id="WP_003130434.1">
    <property type="nucleotide sequence ID" value="NC_002662.1"/>
</dbReference>
<dbReference type="SMR" id="Q01997"/>
<dbReference type="PaxDb" id="272623-L0048"/>
<dbReference type="EnsemblBacteria" id="AAK05560">
    <property type="protein sequence ID" value="AAK05560"/>
    <property type="gene ID" value="L0048"/>
</dbReference>
<dbReference type="KEGG" id="lla:L0048"/>
<dbReference type="PATRIC" id="fig|272623.7.peg.1572"/>
<dbReference type="eggNOG" id="COG0159">
    <property type="taxonomic scope" value="Bacteria"/>
</dbReference>
<dbReference type="HOGENOM" id="CLU_016734_0_0_9"/>
<dbReference type="OrthoDB" id="9804578at2"/>
<dbReference type="UniPathway" id="UPA00035">
    <property type="reaction ID" value="UER00044"/>
</dbReference>
<dbReference type="Proteomes" id="UP000002196">
    <property type="component" value="Chromosome"/>
</dbReference>
<dbReference type="GO" id="GO:0005829">
    <property type="term" value="C:cytosol"/>
    <property type="evidence" value="ECO:0007669"/>
    <property type="project" value="TreeGrafter"/>
</dbReference>
<dbReference type="GO" id="GO:0004834">
    <property type="term" value="F:tryptophan synthase activity"/>
    <property type="evidence" value="ECO:0007669"/>
    <property type="project" value="UniProtKB-UniRule"/>
</dbReference>
<dbReference type="CDD" id="cd04724">
    <property type="entry name" value="Tryptophan_synthase_alpha"/>
    <property type="match status" value="1"/>
</dbReference>
<dbReference type="Gene3D" id="3.20.20.70">
    <property type="entry name" value="Aldolase class I"/>
    <property type="match status" value="1"/>
</dbReference>
<dbReference type="HAMAP" id="MF_00131">
    <property type="entry name" value="Trp_synth_alpha"/>
    <property type="match status" value="1"/>
</dbReference>
<dbReference type="InterPro" id="IPR013785">
    <property type="entry name" value="Aldolase_TIM"/>
</dbReference>
<dbReference type="InterPro" id="IPR011060">
    <property type="entry name" value="RibuloseP-bd_barrel"/>
</dbReference>
<dbReference type="InterPro" id="IPR018204">
    <property type="entry name" value="Trp_synthase_alpha_AS"/>
</dbReference>
<dbReference type="InterPro" id="IPR002028">
    <property type="entry name" value="Trp_synthase_suA"/>
</dbReference>
<dbReference type="NCBIfam" id="TIGR00262">
    <property type="entry name" value="trpA"/>
    <property type="match status" value="1"/>
</dbReference>
<dbReference type="PANTHER" id="PTHR43406:SF1">
    <property type="entry name" value="TRYPTOPHAN SYNTHASE ALPHA CHAIN, CHLOROPLASTIC"/>
    <property type="match status" value="1"/>
</dbReference>
<dbReference type="PANTHER" id="PTHR43406">
    <property type="entry name" value="TRYPTOPHAN SYNTHASE, ALPHA CHAIN"/>
    <property type="match status" value="1"/>
</dbReference>
<dbReference type="Pfam" id="PF00290">
    <property type="entry name" value="Trp_syntA"/>
    <property type="match status" value="1"/>
</dbReference>
<dbReference type="SUPFAM" id="SSF51366">
    <property type="entry name" value="Ribulose-phoshate binding barrel"/>
    <property type="match status" value="1"/>
</dbReference>
<dbReference type="PROSITE" id="PS00167">
    <property type="entry name" value="TRP_SYNTHASE_ALPHA"/>
    <property type="match status" value="1"/>
</dbReference>
<reference key="1">
    <citation type="journal article" date="1992" name="J. Bacteriol.">
        <title>Tryptophan biosynthesis genes in Lactococcus lactis subsp. lactis.</title>
        <authorList>
            <person name="Bardowski J."/>
            <person name="Ehrlich S.D."/>
            <person name="Chopin A."/>
        </authorList>
    </citation>
    <scope>NUCLEOTIDE SEQUENCE [GENOMIC DNA]</scope>
    <source>
        <strain>IL1403</strain>
    </source>
</reference>
<reference key="2">
    <citation type="journal article" date="2001" name="Genome Res.">
        <title>The complete genome sequence of the lactic acid bacterium Lactococcus lactis ssp. lactis IL1403.</title>
        <authorList>
            <person name="Bolotin A."/>
            <person name="Wincker P."/>
            <person name="Mauger S."/>
            <person name="Jaillon O."/>
            <person name="Malarme K."/>
            <person name="Weissenbach J."/>
            <person name="Ehrlich S.D."/>
            <person name="Sorokin A."/>
        </authorList>
    </citation>
    <scope>NUCLEOTIDE SEQUENCE [LARGE SCALE GENOMIC DNA]</scope>
    <source>
        <strain>IL1403</strain>
    </source>
</reference>
<proteinExistence type="inferred from homology"/>
<keyword id="KW-0028">Amino-acid biosynthesis</keyword>
<keyword id="KW-0057">Aromatic amino acid biosynthesis</keyword>
<keyword id="KW-0456">Lyase</keyword>
<keyword id="KW-1185">Reference proteome</keyword>
<keyword id="KW-0822">Tryptophan biosynthesis</keyword>
<feature type="chain" id="PRO_0000098794" description="Tryptophan synthase alpha chain">
    <location>
        <begin position="1"/>
        <end position="253"/>
    </location>
</feature>
<feature type="active site" description="Proton acceptor" evidence="1">
    <location>
        <position position="47"/>
    </location>
</feature>
<feature type="active site" description="Proton acceptor" evidence="1">
    <location>
        <position position="58"/>
    </location>
</feature>
<gene>
    <name evidence="1" type="primary">trpA</name>
    <name type="ordered locus">LL1462</name>
    <name type="ORF">L0048</name>
</gene>
<evidence type="ECO:0000255" key="1">
    <source>
        <dbReference type="HAMAP-Rule" id="MF_00131"/>
    </source>
</evidence>
<protein>
    <recommendedName>
        <fullName evidence="1">Tryptophan synthase alpha chain</fullName>
        <ecNumber evidence="1">4.2.1.20</ecNumber>
    </recommendedName>
</protein>
<name>TRPA_LACLA</name>
<sequence length="253" mass="27685">MKTLQMTLSNKKNNFIPYIMAGDHEKGLEGLKETIQLLEQAGSSAIEIGVPFSDPVADGPVIEQAGLRALARNVSLSSILETLKTIDTKVPLVIMTYFNPVYQFGIEKFVAALEKTPVKGLIIPDLPKEHEDYIKPFINDKDICLVPLVSLTTPLSRQKELVADAEGFIYAVAINGVTGKENAYSNQLDQHLKALSSLTDVPVLTGFGISTLSDVDRFNKVSSGVIVGSKIVRDLHEGKENEVIKFIENAINF</sequence>
<accession>Q01997</accession>